<name>RAC3_ORYSJ</name>
<keyword id="KW-0963">Cytoplasm</keyword>
<keyword id="KW-0342">GTP-binding</keyword>
<keyword id="KW-0449">Lipoprotein</keyword>
<keyword id="KW-0472">Membrane</keyword>
<keyword id="KW-0547">Nucleotide-binding</keyword>
<keyword id="KW-0564">Palmitate</keyword>
<keyword id="KW-1185">Reference proteome</keyword>
<sequence length="214" mass="23967">MASSASRFIKCVTVGDGAVGKTCMLICYTSNKFPTDYIPTVFDNFSANVVVDSTTVNLGLWDTAGQEDYNRLRPLSYRGADVFVLAFSLVSRASYENIMKKWIPELQHYAPGVPIVLVGTKLDLREDKHYLLDHPGMIPVTTAQGEELRKQIGAAYYIECSSKTQQNVKGVFDAAIKVVIQPPTKQREKKKKKSRQGCSMMNMFRGRKMSCFKS</sequence>
<feature type="chain" id="PRO_0000227572" description="Rac-like GTP-binding protein 3">
    <location>
        <begin position="1"/>
        <end position="214"/>
    </location>
</feature>
<feature type="short sequence motif" description="Effector region" evidence="2">
    <location>
        <begin position="37"/>
        <end position="45"/>
    </location>
</feature>
<feature type="binding site" evidence="1">
    <location>
        <begin position="15"/>
        <end position="22"/>
    </location>
    <ligand>
        <name>GTP</name>
        <dbReference type="ChEBI" id="CHEBI:37565"/>
    </ligand>
</feature>
<feature type="binding site" evidence="1">
    <location>
        <begin position="62"/>
        <end position="66"/>
    </location>
    <ligand>
        <name>GTP</name>
        <dbReference type="ChEBI" id="CHEBI:37565"/>
    </ligand>
</feature>
<feature type="binding site" evidence="1">
    <location>
        <begin position="120"/>
        <end position="123"/>
    </location>
    <ligand>
        <name>GTP</name>
        <dbReference type="ChEBI" id="CHEBI:37565"/>
    </ligand>
</feature>
<organism>
    <name type="scientific">Oryza sativa subsp. japonica</name>
    <name type="common">Rice</name>
    <dbReference type="NCBI Taxonomy" id="39947"/>
    <lineage>
        <taxon>Eukaryota</taxon>
        <taxon>Viridiplantae</taxon>
        <taxon>Streptophyta</taxon>
        <taxon>Embryophyta</taxon>
        <taxon>Tracheophyta</taxon>
        <taxon>Spermatophyta</taxon>
        <taxon>Magnoliopsida</taxon>
        <taxon>Liliopsida</taxon>
        <taxon>Poales</taxon>
        <taxon>Poaceae</taxon>
        <taxon>BOP clade</taxon>
        <taxon>Oryzoideae</taxon>
        <taxon>Oryzeae</taxon>
        <taxon>Oryzinae</taxon>
        <taxon>Oryza</taxon>
        <taxon>Oryza sativa</taxon>
    </lineage>
</organism>
<protein>
    <recommendedName>
        <fullName>Rac-like GTP-binding protein 3</fullName>
    </recommendedName>
    <alternativeName>
        <fullName>OsRac3</fullName>
    </alternativeName>
</protein>
<comment type="function">
    <text evidence="1">Inactive GDP-bound Rho GTPases reside in the cytosol, are found in a complex with Rho GDP-dissociation inhibitors (Rho GDIs), and are released from the GDI protein in order to translocate to membranes upon activation.</text>
</comment>
<comment type="subcellular location">
    <subcellularLocation>
        <location evidence="1">Cytoplasm</location>
    </subcellularLocation>
    <subcellularLocation>
        <location evidence="1">Membrane</location>
        <topology evidence="1">Peripheral membrane protein</topology>
    </subcellularLocation>
    <text>Associated with the membrane when activated.</text>
</comment>
<comment type="PTM">
    <text>May be palmitoylated.</text>
</comment>
<comment type="similarity">
    <text evidence="3">Belongs to the small GTPase superfamily. Rho family.</text>
</comment>
<dbReference type="EMBL" id="AB029510">
    <property type="protein sequence ID" value="BAA84494.1"/>
    <property type="molecule type" value="mRNA"/>
</dbReference>
<dbReference type="EMBL" id="AP004800">
    <property type="protein sequence ID" value="BAD15735.1"/>
    <property type="molecule type" value="Genomic_DNA"/>
</dbReference>
<dbReference type="EMBL" id="AP008208">
    <property type="protein sequence ID" value="BAF10002.1"/>
    <property type="molecule type" value="Genomic_DNA"/>
</dbReference>
<dbReference type="EMBL" id="AP014958">
    <property type="protein sequence ID" value="BAS80863.1"/>
    <property type="molecule type" value="Genomic_DNA"/>
</dbReference>
<dbReference type="EMBL" id="CM000139">
    <property type="protein sequence ID" value="EEE57791.1"/>
    <property type="molecule type" value="Genomic_DNA"/>
</dbReference>
<dbReference type="RefSeq" id="XP_015625155.1">
    <property type="nucleotide sequence ID" value="XM_015769669.1"/>
</dbReference>
<dbReference type="SMR" id="Q6Z808"/>
<dbReference type="FunCoup" id="Q6Z808">
    <property type="interactions" value="2482"/>
</dbReference>
<dbReference type="STRING" id="39947.Q6Z808"/>
<dbReference type="PaxDb" id="39947-Q6Z808"/>
<dbReference type="EnsemblPlants" id="Os02t0742200-01">
    <property type="protein sequence ID" value="Os02t0742200-01"/>
    <property type="gene ID" value="Os02g0742200"/>
</dbReference>
<dbReference type="EnsemblPlants" id="Os02t0742200-02">
    <property type="protein sequence ID" value="Os02t0742200-02"/>
    <property type="gene ID" value="Os02g0742200"/>
</dbReference>
<dbReference type="Gramene" id="Os02t0742200-01">
    <property type="protein sequence ID" value="Os02t0742200-01"/>
    <property type="gene ID" value="Os02g0742200"/>
</dbReference>
<dbReference type="Gramene" id="Os02t0742200-02">
    <property type="protein sequence ID" value="Os02t0742200-02"/>
    <property type="gene ID" value="Os02g0742200"/>
</dbReference>
<dbReference type="KEGG" id="dosa:Os02g0742200"/>
<dbReference type="eggNOG" id="KOG0393">
    <property type="taxonomic scope" value="Eukaryota"/>
</dbReference>
<dbReference type="HOGENOM" id="CLU_041217_21_3_1"/>
<dbReference type="InParanoid" id="Q6Z808"/>
<dbReference type="OMA" id="PFCDVFL"/>
<dbReference type="OrthoDB" id="8830751at2759"/>
<dbReference type="Proteomes" id="UP000000763">
    <property type="component" value="Chromosome 2"/>
</dbReference>
<dbReference type="Proteomes" id="UP000007752">
    <property type="component" value="Chromosome 2"/>
</dbReference>
<dbReference type="Proteomes" id="UP000059680">
    <property type="component" value="Chromosome 2"/>
</dbReference>
<dbReference type="GO" id="GO:0042995">
    <property type="term" value="C:cell projection"/>
    <property type="evidence" value="ECO:0000318"/>
    <property type="project" value="GO_Central"/>
</dbReference>
<dbReference type="GO" id="GO:0031410">
    <property type="term" value="C:cytoplasmic vesicle"/>
    <property type="evidence" value="ECO:0000318"/>
    <property type="project" value="GO_Central"/>
</dbReference>
<dbReference type="GO" id="GO:0005856">
    <property type="term" value="C:cytoskeleton"/>
    <property type="evidence" value="ECO:0000318"/>
    <property type="project" value="GO_Central"/>
</dbReference>
<dbReference type="GO" id="GO:0005886">
    <property type="term" value="C:plasma membrane"/>
    <property type="evidence" value="ECO:0000318"/>
    <property type="project" value="GO_Central"/>
</dbReference>
<dbReference type="GO" id="GO:0005525">
    <property type="term" value="F:GTP binding"/>
    <property type="evidence" value="ECO:0000318"/>
    <property type="project" value="GO_Central"/>
</dbReference>
<dbReference type="GO" id="GO:0003924">
    <property type="term" value="F:GTPase activity"/>
    <property type="evidence" value="ECO:0000318"/>
    <property type="project" value="GO_Central"/>
</dbReference>
<dbReference type="GO" id="GO:0019901">
    <property type="term" value="F:protein kinase binding"/>
    <property type="evidence" value="ECO:0000318"/>
    <property type="project" value="GO_Central"/>
</dbReference>
<dbReference type="GO" id="GO:0007015">
    <property type="term" value="P:actin filament organization"/>
    <property type="evidence" value="ECO:0000318"/>
    <property type="project" value="GO_Central"/>
</dbReference>
<dbReference type="GO" id="GO:0030865">
    <property type="term" value="P:cortical cytoskeleton organization"/>
    <property type="evidence" value="ECO:0000318"/>
    <property type="project" value="GO_Central"/>
</dbReference>
<dbReference type="GO" id="GO:0007163">
    <property type="term" value="P:establishment or maintenance of cell polarity"/>
    <property type="evidence" value="ECO:0000318"/>
    <property type="project" value="GO_Central"/>
</dbReference>
<dbReference type="GO" id="GO:0032956">
    <property type="term" value="P:regulation of actin cytoskeleton organization"/>
    <property type="evidence" value="ECO:0000318"/>
    <property type="project" value="GO_Central"/>
</dbReference>
<dbReference type="GO" id="GO:0008360">
    <property type="term" value="P:regulation of cell shape"/>
    <property type="evidence" value="ECO:0000318"/>
    <property type="project" value="GO_Central"/>
</dbReference>
<dbReference type="GO" id="GO:0007165">
    <property type="term" value="P:signal transduction"/>
    <property type="evidence" value="ECO:0000318"/>
    <property type="project" value="GO_Central"/>
</dbReference>
<dbReference type="GO" id="GO:0007264">
    <property type="term" value="P:small GTPase-mediated signal transduction"/>
    <property type="evidence" value="ECO:0007669"/>
    <property type="project" value="InterPro"/>
</dbReference>
<dbReference type="CDD" id="cd04133">
    <property type="entry name" value="Rop_like"/>
    <property type="match status" value="1"/>
</dbReference>
<dbReference type="FunFam" id="3.40.50.300:FF:000512">
    <property type="entry name" value="Rac-like GTP-binding protein 3"/>
    <property type="match status" value="1"/>
</dbReference>
<dbReference type="Gene3D" id="3.40.50.300">
    <property type="entry name" value="P-loop containing nucleotide triphosphate hydrolases"/>
    <property type="match status" value="1"/>
</dbReference>
<dbReference type="InterPro" id="IPR027417">
    <property type="entry name" value="P-loop_NTPase"/>
</dbReference>
<dbReference type="InterPro" id="IPR005225">
    <property type="entry name" value="Small_GTP-bd"/>
</dbReference>
<dbReference type="InterPro" id="IPR001806">
    <property type="entry name" value="Small_GTPase"/>
</dbReference>
<dbReference type="InterPro" id="IPR003578">
    <property type="entry name" value="Small_GTPase_Rho"/>
</dbReference>
<dbReference type="NCBIfam" id="TIGR00231">
    <property type="entry name" value="small_GTP"/>
    <property type="match status" value="1"/>
</dbReference>
<dbReference type="PANTHER" id="PTHR24072">
    <property type="entry name" value="RHO FAMILY GTPASE"/>
    <property type="match status" value="1"/>
</dbReference>
<dbReference type="Pfam" id="PF00071">
    <property type="entry name" value="Ras"/>
    <property type="match status" value="1"/>
</dbReference>
<dbReference type="PRINTS" id="PR00449">
    <property type="entry name" value="RASTRNSFRMNG"/>
</dbReference>
<dbReference type="SMART" id="SM00175">
    <property type="entry name" value="RAB"/>
    <property type="match status" value="1"/>
</dbReference>
<dbReference type="SMART" id="SM00173">
    <property type="entry name" value="RAS"/>
    <property type="match status" value="1"/>
</dbReference>
<dbReference type="SMART" id="SM00174">
    <property type="entry name" value="RHO"/>
    <property type="match status" value="1"/>
</dbReference>
<dbReference type="SUPFAM" id="SSF52540">
    <property type="entry name" value="P-loop containing nucleoside triphosphate hydrolases"/>
    <property type="match status" value="1"/>
</dbReference>
<dbReference type="PROSITE" id="PS51420">
    <property type="entry name" value="RHO"/>
    <property type="match status" value="1"/>
</dbReference>
<proteinExistence type="evidence at transcript level"/>
<reference key="1">
    <citation type="journal article" date="1999" name="Proc. Natl. Acad. Sci. U.S.A.">
        <title>The small GTP-binding protein Rac is a regulator of cell death in plants.</title>
        <authorList>
            <person name="Kawasaki T."/>
            <person name="Henmi K."/>
            <person name="Ono E."/>
            <person name="Hatakeyama S."/>
            <person name="Iwano M."/>
            <person name="Satoh H."/>
            <person name="Shimamoto K."/>
        </authorList>
    </citation>
    <scope>NUCLEOTIDE SEQUENCE [MRNA]</scope>
    <scope>TISSUE SPECIFICITY</scope>
</reference>
<reference key="2">
    <citation type="journal article" date="2005" name="Nature">
        <title>The map-based sequence of the rice genome.</title>
        <authorList>
            <consortium name="International rice genome sequencing project (IRGSP)"/>
        </authorList>
    </citation>
    <scope>NUCLEOTIDE SEQUENCE [LARGE SCALE GENOMIC DNA]</scope>
    <source>
        <strain>cv. Nipponbare</strain>
    </source>
</reference>
<reference key="3">
    <citation type="journal article" date="2008" name="Nucleic Acids Res.">
        <title>The rice annotation project database (RAP-DB): 2008 update.</title>
        <authorList>
            <consortium name="The rice annotation project (RAP)"/>
        </authorList>
    </citation>
    <scope>GENOME REANNOTATION</scope>
    <source>
        <strain>cv. Nipponbare</strain>
    </source>
</reference>
<reference key="4">
    <citation type="journal article" date="2013" name="Rice">
        <title>Improvement of the Oryza sativa Nipponbare reference genome using next generation sequence and optical map data.</title>
        <authorList>
            <person name="Kawahara Y."/>
            <person name="de la Bastide M."/>
            <person name="Hamilton J.P."/>
            <person name="Kanamori H."/>
            <person name="McCombie W.R."/>
            <person name="Ouyang S."/>
            <person name="Schwartz D.C."/>
            <person name="Tanaka T."/>
            <person name="Wu J."/>
            <person name="Zhou S."/>
            <person name="Childs K.L."/>
            <person name="Davidson R.M."/>
            <person name="Lin H."/>
            <person name="Quesada-Ocampo L."/>
            <person name="Vaillancourt B."/>
            <person name="Sakai H."/>
            <person name="Lee S.S."/>
            <person name="Kim J."/>
            <person name="Numa H."/>
            <person name="Itoh T."/>
            <person name="Buell C.R."/>
            <person name="Matsumoto T."/>
        </authorList>
    </citation>
    <scope>GENOME REANNOTATION</scope>
    <source>
        <strain>cv. Nipponbare</strain>
    </source>
</reference>
<reference key="5">
    <citation type="journal article" date="2005" name="PLoS Biol.">
        <title>The genomes of Oryza sativa: a history of duplications.</title>
        <authorList>
            <person name="Yu J."/>
            <person name="Wang J."/>
            <person name="Lin W."/>
            <person name="Li S."/>
            <person name="Li H."/>
            <person name="Zhou J."/>
            <person name="Ni P."/>
            <person name="Dong W."/>
            <person name="Hu S."/>
            <person name="Zeng C."/>
            <person name="Zhang J."/>
            <person name="Zhang Y."/>
            <person name="Li R."/>
            <person name="Xu Z."/>
            <person name="Li S."/>
            <person name="Li X."/>
            <person name="Zheng H."/>
            <person name="Cong L."/>
            <person name="Lin L."/>
            <person name="Yin J."/>
            <person name="Geng J."/>
            <person name="Li G."/>
            <person name="Shi J."/>
            <person name="Liu J."/>
            <person name="Lv H."/>
            <person name="Li J."/>
            <person name="Wang J."/>
            <person name="Deng Y."/>
            <person name="Ran L."/>
            <person name="Shi X."/>
            <person name="Wang X."/>
            <person name="Wu Q."/>
            <person name="Li C."/>
            <person name="Ren X."/>
            <person name="Wang J."/>
            <person name="Wang X."/>
            <person name="Li D."/>
            <person name="Liu D."/>
            <person name="Zhang X."/>
            <person name="Ji Z."/>
            <person name="Zhao W."/>
            <person name="Sun Y."/>
            <person name="Zhang Z."/>
            <person name="Bao J."/>
            <person name="Han Y."/>
            <person name="Dong L."/>
            <person name="Ji J."/>
            <person name="Chen P."/>
            <person name="Wu S."/>
            <person name="Liu J."/>
            <person name="Xiao Y."/>
            <person name="Bu D."/>
            <person name="Tan J."/>
            <person name="Yang L."/>
            <person name="Ye C."/>
            <person name="Zhang J."/>
            <person name="Xu J."/>
            <person name="Zhou Y."/>
            <person name="Yu Y."/>
            <person name="Zhang B."/>
            <person name="Zhuang S."/>
            <person name="Wei H."/>
            <person name="Liu B."/>
            <person name="Lei M."/>
            <person name="Yu H."/>
            <person name="Li Y."/>
            <person name="Xu H."/>
            <person name="Wei S."/>
            <person name="He X."/>
            <person name="Fang L."/>
            <person name="Zhang Z."/>
            <person name="Zhang Y."/>
            <person name="Huang X."/>
            <person name="Su Z."/>
            <person name="Tong W."/>
            <person name="Li J."/>
            <person name="Tong Z."/>
            <person name="Li S."/>
            <person name="Ye J."/>
            <person name="Wang L."/>
            <person name="Fang L."/>
            <person name="Lei T."/>
            <person name="Chen C.-S."/>
            <person name="Chen H.-C."/>
            <person name="Xu Z."/>
            <person name="Li H."/>
            <person name="Huang H."/>
            <person name="Zhang F."/>
            <person name="Xu H."/>
            <person name="Li N."/>
            <person name="Zhao C."/>
            <person name="Li S."/>
            <person name="Dong L."/>
            <person name="Huang Y."/>
            <person name="Li L."/>
            <person name="Xi Y."/>
            <person name="Qi Q."/>
            <person name="Li W."/>
            <person name="Zhang B."/>
            <person name="Hu W."/>
            <person name="Zhang Y."/>
            <person name="Tian X."/>
            <person name="Jiao Y."/>
            <person name="Liang X."/>
            <person name="Jin J."/>
            <person name="Gao L."/>
            <person name="Zheng W."/>
            <person name="Hao B."/>
            <person name="Liu S.-M."/>
            <person name="Wang W."/>
            <person name="Yuan L."/>
            <person name="Cao M."/>
            <person name="McDermott J."/>
            <person name="Samudrala R."/>
            <person name="Wang J."/>
            <person name="Wong G.K.-S."/>
            <person name="Yang H."/>
        </authorList>
    </citation>
    <scope>NUCLEOTIDE SEQUENCE [LARGE SCALE GENOMIC DNA]</scope>
    <source>
        <strain>cv. Nipponbare</strain>
    </source>
</reference>
<reference key="6">
    <citation type="journal article" date="2005" name="Plant Physiol.">
        <title>RNA silencing of single and multiple members in a gene family of rice.</title>
        <authorList>
            <person name="Miki D."/>
            <person name="Itoh R."/>
            <person name="Shimamoto K."/>
        </authorList>
    </citation>
    <scope>NOMENCLATURE</scope>
</reference>
<accession>Q6Z808</accession>
<accession>Q0DXN6</accession>
<accession>Q9SSW8</accession>
<gene>
    <name type="primary">RAC3</name>
    <name type="ordered locus">Os02g0742200</name>
    <name type="ordered locus">LOC_Os02g50860</name>
    <name evidence="4" type="ORF">OsJ_08342</name>
    <name type="ORF">P0585G03.19</name>
</gene>
<evidence type="ECO:0000250" key="1"/>
<evidence type="ECO:0000255" key="2"/>
<evidence type="ECO:0000305" key="3"/>
<evidence type="ECO:0000312" key="4">
    <source>
        <dbReference type="EMBL" id="EEE57791.1"/>
    </source>
</evidence>